<reference key="1">
    <citation type="journal article" date="2008" name="PLoS ONE">
        <title>Comparative analysis of Acinetobacters: three genomes for three lifestyles.</title>
        <authorList>
            <person name="Vallenet D."/>
            <person name="Nordmann P."/>
            <person name="Barbe V."/>
            <person name="Poirel L."/>
            <person name="Mangenot S."/>
            <person name="Bataille E."/>
            <person name="Dossat C."/>
            <person name="Gas S."/>
            <person name="Kreimeyer A."/>
            <person name="Lenoble P."/>
            <person name="Oztas S."/>
            <person name="Poulain J."/>
            <person name="Segurens B."/>
            <person name="Robert C."/>
            <person name="Abergel C."/>
            <person name="Claverie J.-M."/>
            <person name="Raoult D."/>
            <person name="Medigue C."/>
            <person name="Weissenbach J."/>
            <person name="Cruveiller S."/>
        </authorList>
    </citation>
    <scope>NUCLEOTIDE SEQUENCE [LARGE SCALE GENOMIC DNA]</scope>
    <source>
        <strain>AYE</strain>
    </source>
</reference>
<proteinExistence type="inferred from homology"/>
<keyword id="KW-0067">ATP-binding</keyword>
<keyword id="KW-0963">Cytoplasm</keyword>
<keyword id="KW-0460">Magnesium</keyword>
<keyword id="KW-0479">Metal-binding</keyword>
<keyword id="KW-0547">Nucleotide-binding</keyword>
<keyword id="KW-0554">One-carbon metabolism</keyword>
<keyword id="KW-0630">Potassium</keyword>
<keyword id="KW-0808">Transferase</keyword>
<sequence length="388" mass="41974">MREYAVFTSESVSEGHPDKMADQISDAILDAILKEDPYARVACETLVKTGAVVLAGEITTTANIDVEAVVRQTVNGIGYHHSDLGFDGSTCAVINMIGKQSPEIAQGVDRQKPEDQGAGDQGLMFGYASRETDVLMPAPISYAHRLMERQAELRRSGALPWLRPDAKSQVTFAYENGKPVRLDAVVLSTQHDPEITQTQLKEAVIEEIIKPIIPAEMFHAATKFHINPTGMFVIGGPVGDCGLTGRKIIVDTYGGMARHGGGAFSGKDPSKVDRSAAYAGRYVAKNIVAAGLADKCEIQVSYAIGVAEPTSISINTFGTAKVSDELIIQLVREHFDLRPFGITRMLNLIQPMYKQTAAYGHFGREGSNTAFTWEKTDKVEALKDAAGL</sequence>
<comment type="function">
    <text evidence="1">Catalyzes the formation of S-adenosylmethionine (AdoMet) from methionine and ATP. The overall synthetic reaction is composed of two sequential steps, AdoMet formation and the subsequent tripolyphosphate hydrolysis which occurs prior to release of AdoMet from the enzyme.</text>
</comment>
<comment type="catalytic activity">
    <reaction evidence="1">
        <text>L-methionine + ATP + H2O = S-adenosyl-L-methionine + phosphate + diphosphate</text>
        <dbReference type="Rhea" id="RHEA:21080"/>
        <dbReference type="ChEBI" id="CHEBI:15377"/>
        <dbReference type="ChEBI" id="CHEBI:30616"/>
        <dbReference type="ChEBI" id="CHEBI:33019"/>
        <dbReference type="ChEBI" id="CHEBI:43474"/>
        <dbReference type="ChEBI" id="CHEBI:57844"/>
        <dbReference type="ChEBI" id="CHEBI:59789"/>
        <dbReference type="EC" id="2.5.1.6"/>
    </reaction>
</comment>
<comment type="cofactor">
    <cofactor evidence="1">
        <name>Mg(2+)</name>
        <dbReference type="ChEBI" id="CHEBI:18420"/>
    </cofactor>
    <text evidence="1">Binds 2 divalent ions per subunit.</text>
</comment>
<comment type="cofactor">
    <cofactor evidence="1">
        <name>K(+)</name>
        <dbReference type="ChEBI" id="CHEBI:29103"/>
    </cofactor>
    <text evidence="1">Binds 1 potassium ion per subunit.</text>
</comment>
<comment type="pathway">
    <text evidence="1">Amino-acid biosynthesis; S-adenosyl-L-methionine biosynthesis; S-adenosyl-L-methionine from L-methionine: step 1/1.</text>
</comment>
<comment type="subunit">
    <text evidence="1">Homotetramer; dimer of dimers.</text>
</comment>
<comment type="subcellular location">
    <subcellularLocation>
        <location evidence="1">Cytoplasm</location>
    </subcellularLocation>
</comment>
<comment type="similarity">
    <text evidence="1">Belongs to the AdoMet synthase family.</text>
</comment>
<dbReference type="EC" id="2.5.1.6" evidence="1"/>
<dbReference type="EMBL" id="CU459141">
    <property type="protein sequence ID" value="CAM86990.1"/>
    <property type="molecule type" value="Genomic_DNA"/>
</dbReference>
<dbReference type="RefSeq" id="WP_001209545.1">
    <property type="nucleotide sequence ID" value="NZ_JBDGFB010000001.1"/>
</dbReference>
<dbReference type="SMR" id="B0VC98"/>
<dbReference type="EnsemblBacteria" id="CAM86990">
    <property type="protein sequence ID" value="CAM86990"/>
    <property type="gene ID" value="ABAYE2118"/>
</dbReference>
<dbReference type="KEGG" id="aby:ABAYE2118"/>
<dbReference type="HOGENOM" id="CLU_041802_1_1_6"/>
<dbReference type="UniPathway" id="UPA00315">
    <property type="reaction ID" value="UER00080"/>
</dbReference>
<dbReference type="GO" id="GO:0005737">
    <property type="term" value="C:cytoplasm"/>
    <property type="evidence" value="ECO:0007669"/>
    <property type="project" value="UniProtKB-SubCell"/>
</dbReference>
<dbReference type="GO" id="GO:0005524">
    <property type="term" value="F:ATP binding"/>
    <property type="evidence" value="ECO:0007669"/>
    <property type="project" value="UniProtKB-UniRule"/>
</dbReference>
<dbReference type="GO" id="GO:0000287">
    <property type="term" value="F:magnesium ion binding"/>
    <property type="evidence" value="ECO:0007669"/>
    <property type="project" value="UniProtKB-UniRule"/>
</dbReference>
<dbReference type="GO" id="GO:0004478">
    <property type="term" value="F:methionine adenosyltransferase activity"/>
    <property type="evidence" value="ECO:0007669"/>
    <property type="project" value="UniProtKB-UniRule"/>
</dbReference>
<dbReference type="GO" id="GO:0006730">
    <property type="term" value="P:one-carbon metabolic process"/>
    <property type="evidence" value="ECO:0007669"/>
    <property type="project" value="UniProtKB-KW"/>
</dbReference>
<dbReference type="GO" id="GO:0006556">
    <property type="term" value="P:S-adenosylmethionine biosynthetic process"/>
    <property type="evidence" value="ECO:0007669"/>
    <property type="project" value="UniProtKB-UniRule"/>
</dbReference>
<dbReference type="CDD" id="cd18079">
    <property type="entry name" value="S-AdoMet_synt"/>
    <property type="match status" value="1"/>
</dbReference>
<dbReference type="FunFam" id="3.30.300.10:FF:000003">
    <property type="entry name" value="S-adenosylmethionine synthase"/>
    <property type="match status" value="1"/>
</dbReference>
<dbReference type="Gene3D" id="3.30.300.10">
    <property type="match status" value="3"/>
</dbReference>
<dbReference type="HAMAP" id="MF_00086">
    <property type="entry name" value="S_AdoMet_synth1"/>
    <property type="match status" value="1"/>
</dbReference>
<dbReference type="InterPro" id="IPR022631">
    <property type="entry name" value="ADOMET_SYNTHASE_CS"/>
</dbReference>
<dbReference type="InterPro" id="IPR022630">
    <property type="entry name" value="S-AdoMet_synt_C"/>
</dbReference>
<dbReference type="InterPro" id="IPR022629">
    <property type="entry name" value="S-AdoMet_synt_central"/>
</dbReference>
<dbReference type="InterPro" id="IPR022628">
    <property type="entry name" value="S-AdoMet_synt_N"/>
</dbReference>
<dbReference type="InterPro" id="IPR002133">
    <property type="entry name" value="S-AdoMet_synthetase"/>
</dbReference>
<dbReference type="InterPro" id="IPR022636">
    <property type="entry name" value="S-AdoMet_synthetase_sfam"/>
</dbReference>
<dbReference type="NCBIfam" id="TIGR01034">
    <property type="entry name" value="metK"/>
    <property type="match status" value="1"/>
</dbReference>
<dbReference type="PANTHER" id="PTHR11964">
    <property type="entry name" value="S-ADENOSYLMETHIONINE SYNTHETASE"/>
    <property type="match status" value="1"/>
</dbReference>
<dbReference type="Pfam" id="PF02773">
    <property type="entry name" value="S-AdoMet_synt_C"/>
    <property type="match status" value="1"/>
</dbReference>
<dbReference type="Pfam" id="PF02772">
    <property type="entry name" value="S-AdoMet_synt_M"/>
    <property type="match status" value="1"/>
</dbReference>
<dbReference type="Pfam" id="PF00438">
    <property type="entry name" value="S-AdoMet_synt_N"/>
    <property type="match status" value="1"/>
</dbReference>
<dbReference type="PIRSF" id="PIRSF000497">
    <property type="entry name" value="MAT"/>
    <property type="match status" value="1"/>
</dbReference>
<dbReference type="SUPFAM" id="SSF55973">
    <property type="entry name" value="S-adenosylmethionine synthetase"/>
    <property type="match status" value="3"/>
</dbReference>
<dbReference type="PROSITE" id="PS00376">
    <property type="entry name" value="ADOMET_SYNTHASE_1"/>
    <property type="match status" value="1"/>
</dbReference>
<dbReference type="PROSITE" id="PS00377">
    <property type="entry name" value="ADOMET_SYNTHASE_2"/>
    <property type="match status" value="1"/>
</dbReference>
<organism>
    <name type="scientific">Acinetobacter baumannii (strain AYE)</name>
    <dbReference type="NCBI Taxonomy" id="509173"/>
    <lineage>
        <taxon>Bacteria</taxon>
        <taxon>Pseudomonadati</taxon>
        <taxon>Pseudomonadota</taxon>
        <taxon>Gammaproteobacteria</taxon>
        <taxon>Moraxellales</taxon>
        <taxon>Moraxellaceae</taxon>
        <taxon>Acinetobacter</taxon>
        <taxon>Acinetobacter calcoaceticus/baumannii complex</taxon>
    </lineage>
</organism>
<accession>B0VC98</accession>
<protein>
    <recommendedName>
        <fullName evidence="1">S-adenosylmethionine synthase</fullName>
        <shortName evidence="1">AdoMet synthase</shortName>
        <ecNumber evidence="1">2.5.1.6</ecNumber>
    </recommendedName>
    <alternativeName>
        <fullName evidence="1">MAT</fullName>
    </alternativeName>
    <alternativeName>
        <fullName evidence="1">Methionine adenosyltransferase</fullName>
    </alternativeName>
</protein>
<feature type="chain" id="PRO_1000093016" description="S-adenosylmethionine synthase">
    <location>
        <begin position="1"/>
        <end position="388"/>
    </location>
</feature>
<feature type="region of interest" description="Flexible loop" evidence="1">
    <location>
        <begin position="100"/>
        <end position="110"/>
    </location>
</feature>
<feature type="binding site" description="in other chain" evidence="1">
    <location>
        <position position="16"/>
    </location>
    <ligand>
        <name>ATP</name>
        <dbReference type="ChEBI" id="CHEBI:30616"/>
        <note>ligand shared between two neighboring subunits</note>
    </ligand>
</feature>
<feature type="binding site" evidence="1">
    <location>
        <position position="18"/>
    </location>
    <ligand>
        <name>Mg(2+)</name>
        <dbReference type="ChEBI" id="CHEBI:18420"/>
    </ligand>
</feature>
<feature type="binding site" evidence="1">
    <location>
        <position position="44"/>
    </location>
    <ligand>
        <name>K(+)</name>
        <dbReference type="ChEBI" id="CHEBI:29103"/>
    </ligand>
</feature>
<feature type="binding site" description="in other chain" evidence="1">
    <location>
        <position position="57"/>
    </location>
    <ligand>
        <name>L-methionine</name>
        <dbReference type="ChEBI" id="CHEBI:57844"/>
        <note>ligand shared between two neighboring subunits</note>
    </ligand>
</feature>
<feature type="binding site" description="in other chain" evidence="1">
    <location>
        <position position="100"/>
    </location>
    <ligand>
        <name>L-methionine</name>
        <dbReference type="ChEBI" id="CHEBI:57844"/>
        <note>ligand shared between two neighboring subunits</note>
    </ligand>
</feature>
<feature type="binding site" description="in other chain" evidence="1">
    <location>
        <begin position="165"/>
        <end position="167"/>
    </location>
    <ligand>
        <name>ATP</name>
        <dbReference type="ChEBI" id="CHEBI:30616"/>
        <note>ligand shared between two neighboring subunits</note>
    </ligand>
</feature>
<feature type="binding site" evidence="1">
    <location>
        <position position="240"/>
    </location>
    <ligand>
        <name>ATP</name>
        <dbReference type="ChEBI" id="CHEBI:30616"/>
        <note>ligand shared between two neighboring subunits</note>
    </ligand>
</feature>
<feature type="binding site" evidence="1">
    <location>
        <position position="240"/>
    </location>
    <ligand>
        <name>L-methionine</name>
        <dbReference type="ChEBI" id="CHEBI:57844"/>
        <note>ligand shared between two neighboring subunits</note>
    </ligand>
</feature>
<feature type="binding site" description="in other chain" evidence="1">
    <location>
        <begin position="246"/>
        <end position="247"/>
    </location>
    <ligand>
        <name>ATP</name>
        <dbReference type="ChEBI" id="CHEBI:30616"/>
        <note>ligand shared between two neighboring subunits</note>
    </ligand>
</feature>
<feature type="binding site" evidence="1">
    <location>
        <position position="263"/>
    </location>
    <ligand>
        <name>ATP</name>
        <dbReference type="ChEBI" id="CHEBI:30616"/>
        <note>ligand shared between two neighboring subunits</note>
    </ligand>
</feature>
<feature type="binding site" evidence="1">
    <location>
        <position position="267"/>
    </location>
    <ligand>
        <name>ATP</name>
        <dbReference type="ChEBI" id="CHEBI:30616"/>
        <note>ligand shared between two neighboring subunits</note>
    </ligand>
</feature>
<feature type="binding site" description="in other chain" evidence="1">
    <location>
        <position position="271"/>
    </location>
    <ligand>
        <name>L-methionine</name>
        <dbReference type="ChEBI" id="CHEBI:57844"/>
        <note>ligand shared between two neighboring subunits</note>
    </ligand>
</feature>
<gene>
    <name evidence="1" type="primary">metK</name>
    <name type="ordered locus">ABAYE2118</name>
</gene>
<evidence type="ECO:0000255" key="1">
    <source>
        <dbReference type="HAMAP-Rule" id="MF_00086"/>
    </source>
</evidence>
<name>METK_ACIBY</name>